<keyword id="KW-0378">Hydrolase</keyword>
<keyword id="KW-1185">Reference proteome</keyword>
<comment type="similarity">
    <text evidence="1">Belongs to the dGTPase family. Type 2 subfamily.</text>
</comment>
<gene>
    <name type="ordered locus">CPE2009</name>
</gene>
<sequence length="342" mass="39414">MKIRENIENFERIKLNKVAKFSDESVGRERLEEPDEIRTCFMVDRDRIIHSKSFRRLKRKTQVFIRTYGDHYRTRLVHTLEVSQVARTIGVALSLNEYLIEAIALGHDLGHAAFAHIGEDVLNDFLPGGFKHNEQSVRVAKKIEKNGLGLNLTKEVLDGILNHSGFSNVSKVAGTFEGQVVRFADKIAYVNHDIDDSIRAGILKEDDLPKNIIEILGASGSERIDTLVKDCVFNTIDNIDKGEPRVSLSKEIGDAFVQLRKFLFDNIYLGKYLEDERKKAEFVLEKVIEYYYNNWEEMPDLYRNICEEEGIHRGVTDYVAGMTDDYCTNEFNKIYIPKFVMY</sequence>
<protein>
    <recommendedName>
        <fullName evidence="1">Deoxyguanosinetriphosphate triphosphohydrolase-like protein</fullName>
    </recommendedName>
</protein>
<dbReference type="EMBL" id="BA000016">
    <property type="protein sequence ID" value="BAB81715.1"/>
    <property type="molecule type" value="Genomic_DNA"/>
</dbReference>
<dbReference type="RefSeq" id="WP_003473730.1">
    <property type="nucleotide sequence ID" value="NC_003366.1"/>
</dbReference>
<dbReference type="SMR" id="Q8XIV4"/>
<dbReference type="STRING" id="195102.gene:10491279"/>
<dbReference type="KEGG" id="cpe:CPE2009"/>
<dbReference type="HOGENOM" id="CLU_028163_1_1_9"/>
<dbReference type="Proteomes" id="UP000000818">
    <property type="component" value="Chromosome"/>
</dbReference>
<dbReference type="GO" id="GO:0016793">
    <property type="term" value="F:triphosphoric monoester hydrolase activity"/>
    <property type="evidence" value="ECO:0007669"/>
    <property type="project" value="InterPro"/>
</dbReference>
<dbReference type="CDD" id="cd00077">
    <property type="entry name" value="HDc"/>
    <property type="match status" value="1"/>
</dbReference>
<dbReference type="Gene3D" id="1.10.3210.10">
    <property type="entry name" value="Hypothetical protein af1432"/>
    <property type="match status" value="1"/>
</dbReference>
<dbReference type="HAMAP" id="MF_01212">
    <property type="entry name" value="dGTPase_type2"/>
    <property type="match status" value="1"/>
</dbReference>
<dbReference type="InterPro" id="IPR051094">
    <property type="entry name" value="Diverse_Catalytic_Enzymes"/>
</dbReference>
<dbReference type="InterPro" id="IPR023023">
    <property type="entry name" value="dNTPase_2"/>
</dbReference>
<dbReference type="InterPro" id="IPR003607">
    <property type="entry name" value="HD/PDEase_dom"/>
</dbReference>
<dbReference type="InterPro" id="IPR006674">
    <property type="entry name" value="HD_domain"/>
</dbReference>
<dbReference type="InterPro" id="IPR026875">
    <property type="entry name" value="PHydrolase_assoc_dom"/>
</dbReference>
<dbReference type="NCBIfam" id="NF002327">
    <property type="entry name" value="PRK01286.1-2"/>
    <property type="match status" value="1"/>
</dbReference>
<dbReference type="NCBIfam" id="NF002329">
    <property type="entry name" value="PRK01286.1-4"/>
    <property type="match status" value="1"/>
</dbReference>
<dbReference type="PANTHER" id="PTHR35795:SF1">
    <property type="entry name" value="BIS(5'-NUCLEOSYL)-TETRAPHOSPHATASE, SYMMETRICAL"/>
    <property type="match status" value="1"/>
</dbReference>
<dbReference type="PANTHER" id="PTHR35795">
    <property type="entry name" value="SLR1885 PROTEIN"/>
    <property type="match status" value="1"/>
</dbReference>
<dbReference type="Pfam" id="PF01966">
    <property type="entry name" value="HD"/>
    <property type="match status" value="1"/>
</dbReference>
<dbReference type="Pfam" id="PF13286">
    <property type="entry name" value="HD_assoc"/>
    <property type="match status" value="1"/>
</dbReference>
<dbReference type="SMART" id="SM00471">
    <property type="entry name" value="HDc"/>
    <property type="match status" value="1"/>
</dbReference>
<dbReference type="SUPFAM" id="SSF109604">
    <property type="entry name" value="HD-domain/PDEase-like"/>
    <property type="match status" value="1"/>
</dbReference>
<dbReference type="PROSITE" id="PS51831">
    <property type="entry name" value="HD"/>
    <property type="match status" value="1"/>
</dbReference>
<proteinExistence type="inferred from homology"/>
<evidence type="ECO:0000255" key="1">
    <source>
        <dbReference type="HAMAP-Rule" id="MF_01212"/>
    </source>
</evidence>
<evidence type="ECO:0000255" key="2">
    <source>
        <dbReference type="PROSITE-ProRule" id="PRU01175"/>
    </source>
</evidence>
<organism>
    <name type="scientific">Clostridium perfringens (strain 13 / Type A)</name>
    <dbReference type="NCBI Taxonomy" id="195102"/>
    <lineage>
        <taxon>Bacteria</taxon>
        <taxon>Bacillati</taxon>
        <taxon>Bacillota</taxon>
        <taxon>Clostridia</taxon>
        <taxon>Eubacteriales</taxon>
        <taxon>Clostridiaceae</taxon>
        <taxon>Clostridium</taxon>
    </lineage>
</organism>
<name>DGTL1_CLOPE</name>
<feature type="chain" id="PRO_0000205299" description="Deoxyguanosinetriphosphate triphosphohydrolase-like protein">
    <location>
        <begin position="1"/>
        <end position="342"/>
    </location>
</feature>
<feature type="domain" description="HD" evidence="2">
    <location>
        <begin position="75"/>
        <end position="190"/>
    </location>
</feature>
<accession>Q8XIV4</accession>
<reference key="1">
    <citation type="journal article" date="2002" name="Proc. Natl. Acad. Sci. U.S.A.">
        <title>Complete genome sequence of Clostridium perfringens, an anaerobic flesh-eater.</title>
        <authorList>
            <person name="Shimizu T."/>
            <person name="Ohtani K."/>
            <person name="Hirakawa H."/>
            <person name="Ohshima K."/>
            <person name="Yamashita A."/>
            <person name="Shiba T."/>
            <person name="Ogasawara N."/>
            <person name="Hattori M."/>
            <person name="Kuhara S."/>
            <person name="Hayashi H."/>
        </authorList>
    </citation>
    <scope>NUCLEOTIDE SEQUENCE [LARGE SCALE GENOMIC DNA]</scope>
    <source>
        <strain>13 / Type A</strain>
    </source>
</reference>